<name>RLMI_SALA4</name>
<reference key="1">
    <citation type="journal article" date="2011" name="J. Bacteriol.">
        <title>Comparative genomics of 28 Salmonella enterica isolates: evidence for CRISPR-mediated adaptive sublineage evolution.</title>
        <authorList>
            <person name="Fricke W.F."/>
            <person name="Mammel M.K."/>
            <person name="McDermott P.F."/>
            <person name="Tartera C."/>
            <person name="White D.G."/>
            <person name="Leclerc J.E."/>
            <person name="Ravel J."/>
            <person name="Cebula T.A."/>
        </authorList>
    </citation>
    <scope>NUCLEOTIDE SEQUENCE [LARGE SCALE GENOMIC DNA]</scope>
    <source>
        <strain>SL483</strain>
    </source>
</reference>
<accession>B5F1W3</accession>
<dbReference type="EC" id="2.1.1.191" evidence="1"/>
<dbReference type="EMBL" id="CP001138">
    <property type="protein sequence ID" value="ACH50171.1"/>
    <property type="molecule type" value="Genomic_DNA"/>
</dbReference>
<dbReference type="RefSeq" id="WP_000140480.1">
    <property type="nucleotide sequence ID" value="NC_011149.1"/>
</dbReference>
<dbReference type="SMR" id="B5F1W3"/>
<dbReference type="KEGG" id="sea:SeAg_B1038"/>
<dbReference type="HOGENOM" id="CLU_014042_0_0_6"/>
<dbReference type="Proteomes" id="UP000008819">
    <property type="component" value="Chromosome"/>
</dbReference>
<dbReference type="GO" id="GO:0005737">
    <property type="term" value="C:cytoplasm"/>
    <property type="evidence" value="ECO:0007669"/>
    <property type="project" value="UniProtKB-SubCell"/>
</dbReference>
<dbReference type="GO" id="GO:0003723">
    <property type="term" value="F:RNA binding"/>
    <property type="evidence" value="ECO:0007669"/>
    <property type="project" value="UniProtKB-KW"/>
</dbReference>
<dbReference type="GO" id="GO:0016434">
    <property type="term" value="F:rRNA (cytosine) methyltransferase activity"/>
    <property type="evidence" value="ECO:0007669"/>
    <property type="project" value="UniProtKB-UniRule"/>
</dbReference>
<dbReference type="CDD" id="cd02440">
    <property type="entry name" value="AdoMet_MTases"/>
    <property type="match status" value="1"/>
</dbReference>
<dbReference type="CDD" id="cd21153">
    <property type="entry name" value="PUA_RlmI"/>
    <property type="match status" value="1"/>
</dbReference>
<dbReference type="CDD" id="cd11572">
    <property type="entry name" value="RlmI_M_like"/>
    <property type="match status" value="1"/>
</dbReference>
<dbReference type="FunFam" id="3.40.50.150:FF:000044">
    <property type="entry name" value="Ribosomal RNA large subunit methyltransferase I"/>
    <property type="match status" value="1"/>
</dbReference>
<dbReference type="Gene3D" id="2.30.130.10">
    <property type="entry name" value="PUA domain"/>
    <property type="match status" value="1"/>
</dbReference>
<dbReference type="Gene3D" id="3.30.750.80">
    <property type="entry name" value="RNA methyltransferase domain (HRMD) like"/>
    <property type="match status" value="1"/>
</dbReference>
<dbReference type="Gene3D" id="3.40.50.150">
    <property type="entry name" value="Vaccinia Virus protein VP39"/>
    <property type="match status" value="1"/>
</dbReference>
<dbReference type="HAMAP" id="MF_01857">
    <property type="entry name" value="23SrRNA_methyltr_I"/>
    <property type="match status" value="1"/>
</dbReference>
<dbReference type="InterPro" id="IPR002478">
    <property type="entry name" value="PUA"/>
</dbReference>
<dbReference type="InterPro" id="IPR015947">
    <property type="entry name" value="PUA-like_sf"/>
</dbReference>
<dbReference type="InterPro" id="IPR036974">
    <property type="entry name" value="PUA_sf"/>
</dbReference>
<dbReference type="InterPro" id="IPR023542">
    <property type="entry name" value="RLMI"/>
</dbReference>
<dbReference type="InterPro" id="IPR041532">
    <property type="entry name" value="RlmI-like_PUA"/>
</dbReference>
<dbReference type="InterPro" id="IPR019614">
    <property type="entry name" value="SAM-dep_methyl-trfase"/>
</dbReference>
<dbReference type="InterPro" id="IPR029063">
    <property type="entry name" value="SAM-dependent_MTases_sf"/>
</dbReference>
<dbReference type="NCBIfam" id="NF011707">
    <property type="entry name" value="PRK15128.1"/>
    <property type="match status" value="1"/>
</dbReference>
<dbReference type="PANTHER" id="PTHR42873">
    <property type="entry name" value="RIBOSOMAL RNA LARGE SUBUNIT METHYLTRANSFERASE"/>
    <property type="match status" value="1"/>
</dbReference>
<dbReference type="PANTHER" id="PTHR42873:SF1">
    <property type="entry name" value="S-ADENOSYLMETHIONINE-DEPENDENT METHYLTRANSFERASE DOMAIN-CONTAINING PROTEIN"/>
    <property type="match status" value="1"/>
</dbReference>
<dbReference type="Pfam" id="PF10672">
    <property type="entry name" value="Methyltrans_SAM"/>
    <property type="match status" value="1"/>
</dbReference>
<dbReference type="Pfam" id="PF17785">
    <property type="entry name" value="PUA_3"/>
    <property type="match status" value="1"/>
</dbReference>
<dbReference type="SMART" id="SM00359">
    <property type="entry name" value="PUA"/>
    <property type="match status" value="1"/>
</dbReference>
<dbReference type="SUPFAM" id="SSF88697">
    <property type="entry name" value="PUA domain-like"/>
    <property type="match status" value="1"/>
</dbReference>
<dbReference type="SUPFAM" id="SSF53335">
    <property type="entry name" value="S-adenosyl-L-methionine-dependent methyltransferases"/>
    <property type="match status" value="1"/>
</dbReference>
<dbReference type="PROSITE" id="PS50890">
    <property type="entry name" value="PUA"/>
    <property type="match status" value="1"/>
</dbReference>
<organism>
    <name type="scientific">Salmonella agona (strain SL483)</name>
    <dbReference type="NCBI Taxonomy" id="454166"/>
    <lineage>
        <taxon>Bacteria</taxon>
        <taxon>Pseudomonadati</taxon>
        <taxon>Pseudomonadota</taxon>
        <taxon>Gammaproteobacteria</taxon>
        <taxon>Enterobacterales</taxon>
        <taxon>Enterobacteriaceae</taxon>
        <taxon>Salmonella</taxon>
    </lineage>
</organism>
<feature type="chain" id="PRO_0000366239" description="Ribosomal RNA large subunit methyltransferase I">
    <location>
        <begin position="1"/>
        <end position="403"/>
    </location>
</feature>
<feature type="domain" description="PUA" evidence="1">
    <location>
        <begin position="9"/>
        <end position="88"/>
    </location>
</feature>
<evidence type="ECO:0000255" key="1">
    <source>
        <dbReference type="HAMAP-Rule" id="MF_01857"/>
    </source>
</evidence>
<proteinExistence type="inferred from homology"/>
<sequence length="403" mass="45176">MTESTFPQYPRLVLSKGREKSLLRRHPWVFSGAVSRLEGKANLGETIDIVDHQGKWLARGAWSPASQIRARVWTFDKAESIDIAFFTRRLRQAQQWRDWLAKKDGLDSYRLIAGESDGLPGVTIDRFGHFLVLQLLSAGAEYQRAALISALQTCYPDCAIYDRSDVAVRKKEGMALTQGPVTGELPPALLPIEEHGMKLLVDIQGGHKTGYYLDQRDSRLATRRYVENQRVLNCFSYTGGFAVSALMGGCRQVVSVDTSQDALDIARQNVELNQLDLSKAEFVRDDVFKLLRAYREHGEKFDVIIMDPPKFVENKSQLMGACRGYKDINMLAIQLLNPGGILLTFSCSGLMTSDLFQKIIADAAIDAGRDVQFIEQFRQAADHPVIATYPEGLYLKGFACRVM</sequence>
<keyword id="KW-0963">Cytoplasm</keyword>
<keyword id="KW-0489">Methyltransferase</keyword>
<keyword id="KW-0694">RNA-binding</keyword>
<keyword id="KW-0698">rRNA processing</keyword>
<keyword id="KW-0949">S-adenosyl-L-methionine</keyword>
<keyword id="KW-0808">Transferase</keyword>
<protein>
    <recommendedName>
        <fullName evidence="1">Ribosomal RNA large subunit methyltransferase I</fullName>
        <ecNumber evidence="1">2.1.1.191</ecNumber>
    </recommendedName>
    <alternativeName>
        <fullName evidence="1">23S rRNA m5C1962 methyltransferase</fullName>
    </alternativeName>
    <alternativeName>
        <fullName evidence="1">rRNA (cytosine-C(5)-)-methyltransferase RlmI</fullName>
    </alternativeName>
</protein>
<comment type="function">
    <text evidence="1">Specifically methylates the cytosine at position 1962 (m5C1962) of 23S rRNA.</text>
</comment>
<comment type="catalytic activity">
    <reaction evidence="1">
        <text>cytidine(1962) in 23S rRNA + S-adenosyl-L-methionine = 5-methylcytidine(1962) in 23S rRNA + S-adenosyl-L-homocysteine + H(+)</text>
        <dbReference type="Rhea" id="RHEA:42912"/>
        <dbReference type="Rhea" id="RHEA-COMP:10382"/>
        <dbReference type="Rhea" id="RHEA-COMP:10386"/>
        <dbReference type="ChEBI" id="CHEBI:15378"/>
        <dbReference type="ChEBI" id="CHEBI:57856"/>
        <dbReference type="ChEBI" id="CHEBI:59789"/>
        <dbReference type="ChEBI" id="CHEBI:74483"/>
        <dbReference type="ChEBI" id="CHEBI:82748"/>
        <dbReference type="EC" id="2.1.1.191"/>
    </reaction>
</comment>
<comment type="subcellular location">
    <subcellularLocation>
        <location evidence="1">Cytoplasm</location>
    </subcellularLocation>
</comment>
<comment type="similarity">
    <text evidence="1">Belongs to the methyltransferase superfamily. RlmI family.</text>
</comment>
<gene>
    <name evidence="1" type="primary">rlmI</name>
    <name type="ordered locus">SeAg_B1038</name>
</gene>